<accession>Q0AUI9</accession>
<gene>
    <name evidence="1" type="primary">rpsQ</name>
    <name type="ordered locus">Swol_2324</name>
</gene>
<protein>
    <recommendedName>
        <fullName evidence="1">Small ribosomal subunit protein uS17</fullName>
    </recommendedName>
    <alternativeName>
        <fullName evidence="2">30S ribosomal protein S17</fullName>
    </alternativeName>
</protein>
<dbReference type="EMBL" id="CP000448">
    <property type="protein sequence ID" value="ABI69615.1"/>
    <property type="molecule type" value="Genomic_DNA"/>
</dbReference>
<dbReference type="RefSeq" id="WP_011641699.1">
    <property type="nucleotide sequence ID" value="NC_008346.1"/>
</dbReference>
<dbReference type="SMR" id="Q0AUI9"/>
<dbReference type="STRING" id="335541.Swol_2324"/>
<dbReference type="KEGG" id="swo:Swol_2324"/>
<dbReference type="eggNOG" id="COG0186">
    <property type="taxonomic scope" value="Bacteria"/>
</dbReference>
<dbReference type="HOGENOM" id="CLU_073626_1_0_9"/>
<dbReference type="OrthoDB" id="9811714at2"/>
<dbReference type="Proteomes" id="UP000001968">
    <property type="component" value="Chromosome"/>
</dbReference>
<dbReference type="GO" id="GO:0022627">
    <property type="term" value="C:cytosolic small ribosomal subunit"/>
    <property type="evidence" value="ECO:0007669"/>
    <property type="project" value="TreeGrafter"/>
</dbReference>
<dbReference type="GO" id="GO:0019843">
    <property type="term" value="F:rRNA binding"/>
    <property type="evidence" value="ECO:0007669"/>
    <property type="project" value="UniProtKB-UniRule"/>
</dbReference>
<dbReference type="GO" id="GO:0003735">
    <property type="term" value="F:structural constituent of ribosome"/>
    <property type="evidence" value="ECO:0007669"/>
    <property type="project" value="InterPro"/>
</dbReference>
<dbReference type="GO" id="GO:0006412">
    <property type="term" value="P:translation"/>
    <property type="evidence" value="ECO:0007669"/>
    <property type="project" value="UniProtKB-UniRule"/>
</dbReference>
<dbReference type="CDD" id="cd00364">
    <property type="entry name" value="Ribosomal_uS17"/>
    <property type="match status" value="1"/>
</dbReference>
<dbReference type="Gene3D" id="2.40.50.140">
    <property type="entry name" value="Nucleic acid-binding proteins"/>
    <property type="match status" value="1"/>
</dbReference>
<dbReference type="HAMAP" id="MF_01345_B">
    <property type="entry name" value="Ribosomal_uS17_B"/>
    <property type="match status" value="1"/>
</dbReference>
<dbReference type="InterPro" id="IPR012340">
    <property type="entry name" value="NA-bd_OB-fold"/>
</dbReference>
<dbReference type="InterPro" id="IPR000266">
    <property type="entry name" value="Ribosomal_uS17"/>
</dbReference>
<dbReference type="InterPro" id="IPR019984">
    <property type="entry name" value="Ribosomal_uS17_bact/chlr"/>
</dbReference>
<dbReference type="InterPro" id="IPR019979">
    <property type="entry name" value="Ribosomal_uS17_CS"/>
</dbReference>
<dbReference type="NCBIfam" id="NF004123">
    <property type="entry name" value="PRK05610.1"/>
    <property type="match status" value="1"/>
</dbReference>
<dbReference type="NCBIfam" id="TIGR03635">
    <property type="entry name" value="uS17_bact"/>
    <property type="match status" value="1"/>
</dbReference>
<dbReference type="PANTHER" id="PTHR10744">
    <property type="entry name" value="40S RIBOSOMAL PROTEIN S11 FAMILY MEMBER"/>
    <property type="match status" value="1"/>
</dbReference>
<dbReference type="PANTHER" id="PTHR10744:SF1">
    <property type="entry name" value="SMALL RIBOSOMAL SUBUNIT PROTEIN US17M"/>
    <property type="match status" value="1"/>
</dbReference>
<dbReference type="Pfam" id="PF00366">
    <property type="entry name" value="Ribosomal_S17"/>
    <property type="match status" value="1"/>
</dbReference>
<dbReference type="PRINTS" id="PR00973">
    <property type="entry name" value="RIBOSOMALS17"/>
</dbReference>
<dbReference type="SUPFAM" id="SSF50249">
    <property type="entry name" value="Nucleic acid-binding proteins"/>
    <property type="match status" value="1"/>
</dbReference>
<dbReference type="PROSITE" id="PS00056">
    <property type="entry name" value="RIBOSOMAL_S17"/>
    <property type="match status" value="1"/>
</dbReference>
<comment type="function">
    <text evidence="1">One of the primary rRNA binding proteins, it binds specifically to the 5'-end of 16S ribosomal RNA.</text>
</comment>
<comment type="subunit">
    <text evidence="1">Part of the 30S ribosomal subunit.</text>
</comment>
<comment type="similarity">
    <text evidence="1">Belongs to the universal ribosomal protein uS17 family.</text>
</comment>
<name>RS17_SYNWW</name>
<organism>
    <name type="scientific">Syntrophomonas wolfei subsp. wolfei (strain DSM 2245B / Goettingen)</name>
    <dbReference type="NCBI Taxonomy" id="335541"/>
    <lineage>
        <taxon>Bacteria</taxon>
        <taxon>Bacillati</taxon>
        <taxon>Bacillota</taxon>
        <taxon>Clostridia</taxon>
        <taxon>Eubacteriales</taxon>
        <taxon>Syntrophomonadaceae</taxon>
        <taxon>Syntrophomonas</taxon>
    </lineage>
</organism>
<feature type="chain" id="PRO_1000055040" description="Small ribosomal subunit protein uS17">
    <location>
        <begin position="1"/>
        <end position="89"/>
    </location>
</feature>
<evidence type="ECO:0000255" key="1">
    <source>
        <dbReference type="HAMAP-Rule" id="MF_01345"/>
    </source>
</evidence>
<evidence type="ECO:0000305" key="2"/>
<proteinExistence type="inferred from homology"/>
<reference key="1">
    <citation type="journal article" date="2010" name="Environ. Microbiol.">
        <title>The genome of Syntrophomonas wolfei: new insights into syntrophic metabolism and biohydrogen production.</title>
        <authorList>
            <person name="Sieber J.R."/>
            <person name="Sims D.R."/>
            <person name="Han C."/>
            <person name="Kim E."/>
            <person name="Lykidis A."/>
            <person name="Lapidus A.L."/>
            <person name="McDonnald E."/>
            <person name="Rohlin L."/>
            <person name="Culley D.E."/>
            <person name="Gunsalus R."/>
            <person name="McInerney M.J."/>
        </authorList>
    </citation>
    <scope>NUCLEOTIDE SEQUENCE [LARGE SCALE GENOMIC DNA]</scope>
    <source>
        <strain>DSM 2245B / Goettingen</strain>
    </source>
</reference>
<sequence>MTENRANRKIRIGTVSSDKMDKTITVSVETVKQHPLYKKTIKTSKKYKAHDENNEAKTGDIVKIMETRPLSKDKRWRLVEIVQKAKTLQ</sequence>
<keyword id="KW-1185">Reference proteome</keyword>
<keyword id="KW-0687">Ribonucleoprotein</keyword>
<keyword id="KW-0689">Ribosomal protein</keyword>
<keyword id="KW-0694">RNA-binding</keyword>
<keyword id="KW-0699">rRNA-binding</keyword>